<protein>
    <recommendedName>
        <fullName>Cation efflux system protein CusC</fullName>
    </recommendedName>
</protein>
<organism>
    <name type="scientific">Escherichia coli O157:H7</name>
    <dbReference type="NCBI Taxonomy" id="83334"/>
    <lineage>
        <taxon>Bacteria</taxon>
        <taxon>Pseudomonadati</taxon>
        <taxon>Pseudomonadota</taxon>
        <taxon>Gammaproteobacteria</taxon>
        <taxon>Enterobacterales</taxon>
        <taxon>Enterobacteriaceae</taxon>
        <taxon>Escherichia</taxon>
    </lineage>
</organism>
<comment type="function">
    <text evidence="1">Forms pores that allow passive diffusion of cations across the outer membrane. Part of a cation efflux system that mediates resistance to copper and silver (By similarity).</text>
</comment>
<comment type="subunit">
    <text evidence="1">Homotrimer. Component of the cus efflux system composed of CusA, CusB, CusC and CusF (By similarity).</text>
</comment>
<comment type="subcellular location">
    <subcellularLocation>
        <location evidence="1">Cell outer membrane</location>
        <topology evidence="1">Multi-pass membrane protein</topology>
    </subcellularLocation>
    <subcellularLocation>
        <location evidence="1">Cell outer membrane</location>
        <topology evidence="2">Lipid-anchor</topology>
    </subcellularLocation>
</comment>
<comment type="induction">
    <text evidence="3">Transcriptionally regulated by CusR in response to copper and silver ions.</text>
</comment>
<comment type="similarity">
    <text evidence="3">Belongs to the outer membrane factor (OMF) (TC 1.B.17) family.</text>
</comment>
<proteinExistence type="inferred from homology"/>
<gene>
    <name type="primary">cusC</name>
    <name type="ordered locus">Z0711</name>
    <name type="ordered locus">ECs0610</name>
</gene>
<dbReference type="EMBL" id="AE005174">
    <property type="protein sequence ID" value="AAG54905.1"/>
    <property type="molecule type" value="Genomic_DNA"/>
</dbReference>
<dbReference type="EMBL" id="BA000007">
    <property type="protein sequence ID" value="BAB34033.1"/>
    <property type="molecule type" value="Genomic_DNA"/>
</dbReference>
<dbReference type="PIR" id="B90705">
    <property type="entry name" value="B90705"/>
</dbReference>
<dbReference type="PIR" id="E85555">
    <property type="entry name" value="E85555"/>
</dbReference>
<dbReference type="RefSeq" id="NP_308637.1">
    <property type="nucleotide sequence ID" value="NC_002695.1"/>
</dbReference>
<dbReference type="RefSeq" id="WP_000074204.1">
    <property type="nucleotide sequence ID" value="NZ_VOAI01000012.1"/>
</dbReference>
<dbReference type="SMR" id="Q8XBY3"/>
<dbReference type="STRING" id="155864.Z0711"/>
<dbReference type="GeneID" id="916968"/>
<dbReference type="KEGG" id="ece:Z0711"/>
<dbReference type="KEGG" id="ecs:ECs_0610"/>
<dbReference type="PATRIC" id="fig|386585.9.peg.718"/>
<dbReference type="eggNOG" id="COG1538">
    <property type="taxonomic scope" value="Bacteria"/>
</dbReference>
<dbReference type="HOGENOM" id="CLU_012817_13_3_6"/>
<dbReference type="OMA" id="CVVGPDH"/>
<dbReference type="Proteomes" id="UP000000558">
    <property type="component" value="Chromosome"/>
</dbReference>
<dbReference type="Proteomes" id="UP000002519">
    <property type="component" value="Chromosome"/>
</dbReference>
<dbReference type="GO" id="GO:0009279">
    <property type="term" value="C:cell outer membrane"/>
    <property type="evidence" value="ECO:0007669"/>
    <property type="project" value="UniProtKB-SubCell"/>
</dbReference>
<dbReference type="GO" id="GO:0046930">
    <property type="term" value="C:pore complex"/>
    <property type="evidence" value="ECO:0007669"/>
    <property type="project" value="UniProtKB-KW"/>
</dbReference>
<dbReference type="GO" id="GO:0019992">
    <property type="term" value="F:diacylglycerol binding"/>
    <property type="evidence" value="ECO:0000250"/>
    <property type="project" value="UniProtKB"/>
</dbReference>
<dbReference type="GO" id="GO:0015562">
    <property type="term" value="F:efflux transmembrane transporter activity"/>
    <property type="evidence" value="ECO:0007669"/>
    <property type="project" value="InterPro"/>
</dbReference>
<dbReference type="GO" id="GO:0015288">
    <property type="term" value="F:porin activity"/>
    <property type="evidence" value="ECO:0007669"/>
    <property type="project" value="UniProtKB-KW"/>
</dbReference>
<dbReference type="GO" id="GO:0006811">
    <property type="term" value="P:monoatomic ion transport"/>
    <property type="evidence" value="ECO:0007669"/>
    <property type="project" value="UniProtKB-KW"/>
</dbReference>
<dbReference type="GO" id="GO:0070207">
    <property type="term" value="P:protein homotrimerization"/>
    <property type="evidence" value="ECO:0000250"/>
    <property type="project" value="UniProtKB"/>
</dbReference>
<dbReference type="Gene3D" id="1.20.1600.10">
    <property type="entry name" value="Outer membrane efflux proteins (OEP)"/>
    <property type="match status" value="1"/>
</dbReference>
<dbReference type="Gene3D" id="2.20.200.10">
    <property type="entry name" value="Outer membrane efflux proteins (OEP)"/>
    <property type="match status" value="1"/>
</dbReference>
<dbReference type="InterPro" id="IPR050737">
    <property type="entry name" value="OMF"/>
</dbReference>
<dbReference type="InterPro" id="IPR003423">
    <property type="entry name" value="OMP_efflux"/>
</dbReference>
<dbReference type="InterPro" id="IPR010131">
    <property type="entry name" value="RND_efflux_OM_lipoprot_NodT"/>
</dbReference>
<dbReference type="NCBIfam" id="TIGR01845">
    <property type="entry name" value="outer_NodT"/>
    <property type="match status" value="1"/>
</dbReference>
<dbReference type="NCBIfam" id="NF007347">
    <property type="entry name" value="PRK09837.1"/>
    <property type="match status" value="1"/>
</dbReference>
<dbReference type="PANTHER" id="PTHR30203:SF32">
    <property type="entry name" value="CATION EFFLUX SYSTEM PROTEIN CUSC"/>
    <property type="match status" value="1"/>
</dbReference>
<dbReference type="PANTHER" id="PTHR30203">
    <property type="entry name" value="OUTER MEMBRANE CATION EFFLUX PROTEIN"/>
    <property type="match status" value="1"/>
</dbReference>
<dbReference type="Pfam" id="PF02321">
    <property type="entry name" value="OEP"/>
    <property type="match status" value="2"/>
</dbReference>
<dbReference type="SUPFAM" id="SSF56954">
    <property type="entry name" value="Outer membrane efflux proteins (OEP)"/>
    <property type="match status" value="1"/>
</dbReference>
<dbReference type="PROSITE" id="PS51257">
    <property type="entry name" value="PROKAR_LIPOPROTEIN"/>
    <property type="match status" value="1"/>
</dbReference>
<sequence length="460" mass="50715">MSPCKLLPFCVALALTGCSLAPDYQRPAMPVPQQFSLSQNGLVNAADNYQNAGWRTFFVDNQVKTLISEALENNRDLRMATLKVQEARAQYRLTDADRYPQLNGEGSGSWSGNLKGDSATTREFSTGLNASFDLDFFGRLKNMSEAERQNYLATEEAQRAVHILLVSNVAQSYFNQQLAYAQLQIAEETLRNYQQSYAFVEKQLLTGSSNVLALEQARGVIESTRSDIAKRQGELAQANNALQLLLGSYGKLPQAQTVNSDSLQSVKLPAGLSSQILLQRPDIMEAEHALMAANANIGAARAAFFPSISLTSGISTASSDLSSLFNASSGMWNFIPKIEIPIFNAGRNQANLDIAEIRQQQSVVNYEQKIQNAFKEVADALALRQSLNDQISAQQRYLASLQITLQRARALYQHGAVSYLEVLDAERSLFATRQTVLDLNYARQVNEISLYTALGGGWQQ</sequence>
<name>CUSC_ECO57</name>
<evidence type="ECO:0000250" key="1"/>
<evidence type="ECO:0000255" key="2">
    <source>
        <dbReference type="PROSITE-ProRule" id="PRU00303"/>
    </source>
</evidence>
<evidence type="ECO:0000305" key="3"/>
<accession>Q8XBY3</accession>
<keyword id="KW-0998">Cell outer membrane</keyword>
<keyword id="KW-0406">Ion transport</keyword>
<keyword id="KW-0449">Lipoprotein</keyword>
<keyword id="KW-0472">Membrane</keyword>
<keyword id="KW-0564">Palmitate</keyword>
<keyword id="KW-0626">Porin</keyword>
<keyword id="KW-1185">Reference proteome</keyword>
<keyword id="KW-0732">Signal</keyword>
<keyword id="KW-0812">Transmembrane</keyword>
<keyword id="KW-1134">Transmembrane beta strand</keyword>
<keyword id="KW-0813">Transport</keyword>
<feature type="signal peptide" evidence="2">
    <location>
        <begin position="1"/>
        <end position="17"/>
    </location>
</feature>
<feature type="chain" id="PRO_0000030993" description="Cation efflux system protein CusC">
    <location>
        <begin position="18"/>
        <end position="460"/>
    </location>
</feature>
<feature type="lipid moiety-binding region" description="N-palmitoyl cysteine" evidence="2">
    <location>
        <position position="18"/>
    </location>
</feature>
<feature type="lipid moiety-binding region" description="S-diacylglycerol cysteine" evidence="2">
    <location>
        <position position="18"/>
    </location>
</feature>
<reference key="1">
    <citation type="journal article" date="2001" name="Nature">
        <title>Genome sequence of enterohaemorrhagic Escherichia coli O157:H7.</title>
        <authorList>
            <person name="Perna N.T."/>
            <person name="Plunkett G. III"/>
            <person name="Burland V."/>
            <person name="Mau B."/>
            <person name="Glasner J.D."/>
            <person name="Rose D.J."/>
            <person name="Mayhew G.F."/>
            <person name="Evans P.S."/>
            <person name="Gregor J."/>
            <person name="Kirkpatrick H.A."/>
            <person name="Posfai G."/>
            <person name="Hackett J."/>
            <person name="Klink S."/>
            <person name="Boutin A."/>
            <person name="Shao Y."/>
            <person name="Miller L."/>
            <person name="Grotbeck E.J."/>
            <person name="Davis N.W."/>
            <person name="Lim A."/>
            <person name="Dimalanta E.T."/>
            <person name="Potamousis K."/>
            <person name="Apodaca J."/>
            <person name="Anantharaman T.S."/>
            <person name="Lin J."/>
            <person name="Yen G."/>
            <person name="Schwartz D.C."/>
            <person name="Welch R.A."/>
            <person name="Blattner F.R."/>
        </authorList>
    </citation>
    <scope>NUCLEOTIDE SEQUENCE [LARGE SCALE GENOMIC DNA]</scope>
    <source>
        <strain>O157:H7 / EDL933 / ATCC 700927 / EHEC</strain>
    </source>
</reference>
<reference key="2">
    <citation type="journal article" date="2001" name="DNA Res.">
        <title>Complete genome sequence of enterohemorrhagic Escherichia coli O157:H7 and genomic comparison with a laboratory strain K-12.</title>
        <authorList>
            <person name="Hayashi T."/>
            <person name="Makino K."/>
            <person name="Ohnishi M."/>
            <person name="Kurokawa K."/>
            <person name="Ishii K."/>
            <person name="Yokoyama K."/>
            <person name="Han C.-G."/>
            <person name="Ohtsubo E."/>
            <person name="Nakayama K."/>
            <person name="Murata T."/>
            <person name="Tanaka M."/>
            <person name="Tobe T."/>
            <person name="Iida T."/>
            <person name="Takami H."/>
            <person name="Honda T."/>
            <person name="Sasakawa C."/>
            <person name="Ogasawara N."/>
            <person name="Yasunaga T."/>
            <person name="Kuhara S."/>
            <person name="Shiba T."/>
            <person name="Hattori M."/>
            <person name="Shinagawa H."/>
        </authorList>
    </citation>
    <scope>NUCLEOTIDE SEQUENCE [LARGE SCALE GENOMIC DNA]</scope>
    <source>
        <strain>O157:H7 / Sakai / RIMD 0509952 / EHEC</strain>
    </source>
</reference>